<sequence>MYRILVINPGSSSTKVAVFEDEKKIAEKNVSHSVEELKKFKRSMDQEPLRRKAVEDFIDEVGYRIEDFSAIAARGGVLEPVPGGTYVVNEYMVDYLINRSPVDHVSNLAAVIGYKLGKPHGIPCFVVDPVSVDEMCDEARFSGIPEIERKSYSHALNIKAVLRKVSREMGKTPEEVKIVVAHLGSGISVCACKNGKIIDVNNANDEGPFSIERTGELPVGDVVKTAYSSKHSAAELKEEFTRKGGLLAYLGTKNLKKALDSMETSRKAKLVVEAMAYQIAKEIGGMCAVLGEKPDAIVITGGMAHEIRFVRMITDYIEKFGKVEVIPGELEMEALALGVLRVLRGEEKAMDYRSVVE</sequence>
<reference key="1">
    <citation type="journal article" date="1999" name="Nature">
        <title>Evidence for lateral gene transfer between Archaea and Bacteria from genome sequence of Thermotoga maritima.</title>
        <authorList>
            <person name="Nelson K.E."/>
            <person name="Clayton R.A."/>
            <person name="Gill S.R."/>
            <person name="Gwinn M.L."/>
            <person name="Dodson R.J."/>
            <person name="Haft D.H."/>
            <person name="Hickey E.K."/>
            <person name="Peterson J.D."/>
            <person name="Nelson W.C."/>
            <person name="Ketchum K.A."/>
            <person name="McDonald L.A."/>
            <person name="Utterback T.R."/>
            <person name="Malek J.A."/>
            <person name="Linher K.D."/>
            <person name="Garrett M.M."/>
            <person name="Stewart A.M."/>
            <person name="Cotton M.D."/>
            <person name="Pratt M.S."/>
            <person name="Phillips C.A."/>
            <person name="Richardson D.L."/>
            <person name="Heidelberg J.F."/>
            <person name="Sutton G.G."/>
            <person name="Fleischmann R.D."/>
            <person name="Eisen J.A."/>
            <person name="White O."/>
            <person name="Salzberg S.L."/>
            <person name="Smith H.O."/>
            <person name="Venter J.C."/>
            <person name="Fraser C.M."/>
        </authorList>
    </citation>
    <scope>NUCLEOTIDE SEQUENCE [LARGE SCALE GENOMIC DNA]</scope>
    <source>
        <strain>ATCC 43589 / DSM 3109 / JCM 10099 / NBRC 100826 / MSB8</strain>
    </source>
</reference>
<protein>
    <recommendedName>
        <fullName evidence="1">Probable butyrate kinase 1</fullName>
        <shortName evidence="1">BK 1</shortName>
        <ecNumber evidence="1">2.7.2.7</ecNumber>
    </recommendedName>
    <alternativeName>
        <fullName evidence="1">Branched-chain carboxylic acid kinase 1</fullName>
    </alternativeName>
</protein>
<accession>Q9X276</accession>
<feature type="chain" id="PRO_0000107674" description="Probable butyrate kinase 1">
    <location>
        <begin position="1"/>
        <end position="357"/>
    </location>
</feature>
<gene>
    <name evidence="1" type="primary">buk1</name>
    <name type="ordered locus">TM_1754</name>
</gene>
<comment type="catalytic activity">
    <reaction evidence="1">
        <text>butanoate + ATP = butanoyl phosphate + ADP</text>
        <dbReference type="Rhea" id="RHEA:13585"/>
        <dbReference type="ChEBI" id="CHEBI:17968"/>
        <dbReference type="ChEBI" id="CHEBI:30616"/>
        <dbReference type="ChEBI" id="CHEBI:58079"/>
        <dbReference type="ChEBI" id="CHEBI:456216"/>
        <dbReference type="EC" id="2.7.2.7"/>
    </reaction>
</comment>
<comment type="subcellular location">
    <subcellularLocation>
        <location evidence="1">Cytoplasm</location>
    </subcellularLocation>
</comment>
<comment type="similarity">
    <text evidence="1">Belongs to the acetokinase family.</text>
</comment>
<organism>
    <name type="scientific">Thermotoga maritima (strain ATCC 43589 / DSM 3109 / JCM 10099 / NBRC 100826 / MSB8)</name>
    <dbReference type="NCBI Taxonomy" id="243274"/>
    <lineage>
        <taxon>Bacteria</taxon>
        <taxon>Thermotogati</taxon>
        <taxon>Thermotogota</taxon>
        <taxon>Thermotogae</taxon>
        <taxon>Thermotogales</taxon>
        <taxon>Thermotogaceae</taxon>
        <taxon>Thermotoga</taxon>
    </lineage>
</organism>
<dbReference type="EC" id="2.7.2.7" evidence="1"/>
<dbReference type="EMBL" id="AE000512">
    <property type="protein sequence ID" value="AAD36819.1"/>
    <property type="molecule type" value="Genomic_DNA"/>
</dbReference>
<dbReference type="PIR" id="C72214">
    <property type="entry name" value="C72214"/>
</dbReference>
<dbReference type="RefSeq" id="NP_229552.1">
    <property type="nucleotide sequence ID" value="NC_000853.1"/>
</dbReference>
<dbReference type="RefSeq" id="WP_004082288.1">
    <property type="nucleotide sequence ID" value="NC_000853.1"/>
</dbReference>
<dbReference type="SMR" id="Q9X276"/>
<dbReference type="STRING" id="243274.TM_1754"/>
<dbReference type="PaxDb" id="243274-THEMA_05465"/>
<dbReference type="EnsemblBacteria" id="AAD36819">
    <property type="protein sequence ID" value="AAD36819"/>
    <property type="gene ID" value="TM_1754"/>
</dbReference>
<dbReference type="KEGG" id="tma:TM1754"/>
<dbReference type="KEGG" id="tmi:THEMA_05465"/>
<dbReference type="KEGG" id="tmm:Tmari_1762"/>
<dbReference type="KEGG" id="tmw:THMA_1796"/>
<dbReference type="eggNOG" id="COG3426">
    <property type="taxonomic scope" value="Bacteria"/>
</dbReference>
<dbReference type="InParanoid" id="Q9X276"/>
<dbReference type="OrthoDB" id="9771859at2"/>
<dbReference type="Proteomes" id="UP000008183">
    <property type="component" value="Chromosome"/>
</dbReference>
<dbReference type="GO" id="GO:0005737">
    <property type="term" value="C:cytoplasm"/>
    <property type="evidence" value="ECO:0007669"/>
    <property type="project" value="UniProtKB-SubCell"/>
</dbReference>
<dbReference type="GO" id="GO:0008776">
    <property type="term" value="F:acetate kinase activity"/>
    <property type="evidence" value="ECO:0000318"/>
    <property type="project" value="GO_Central"/>
</dbReference>
<dbReference type="GO" id="GO:0005524">
    <property type="term" value="F:ATP binding"/>
    <property type="evidence" value="ECO:0007669"/>
    <property type="project" value="UniProtKB-KW"/>
</dbReference>
<dbReference type="GO" id="GO:0047761">
    <property type="term" value="F:butyrate kinase activity"/>
    <property type="evidence" value="ECO:0007669"/>
    <property type="project" value="UniProtKB-UniRule"/>
</dbReference>
<dbReference type="GO" id="GO:0006083">
    <property type="term" value="P:acetate metabolic process"/>
    <property type="evidence" value="ECO:0000318"/>
    <property type="project" value="GO_Central"/>
</dbReference>
<dbReference type="CDD" id="cd24011">
    <property type="entry name" value="ASKHA_NBD_BK"/>
    <property type="match status" value="1"/>
</dbReference>
<dbReference type="Gene3D" id="3.30.420.40">
    <property type="match status" value="2"/>
</dbReference>
<dbReference type="HAMAP" id="MF_00542">
    <property type="entry name" value="Butyrate_kinase"/>
    <property type="match status" value="1"/>
</dbReference>
<dbReference type="InterPro" id="IPR000890">
    <property type="entry name" value="Aliphatic_acid_kin_short-chain"/>
</dbReference>
<dbReference type="InterPro" id="IPR023865">
    <property type="entry name" value="Aliphatic_acid_kinase_CS"/>
</dbReference>
<dbReference type="InterPro" id="IPR043129">
    <property type="entry name" value="ATPase_NBD"/>
</dbReference>
<dbReference type="InterPro" id="IPR011245">
    <property type="entry name" value="Butyrate_kin"/>
</dbReference>
<dbReference type="NCBIfam" id="TIGR02707">
    <property type="entry name" value="butyr_kinase"/>
    <property type="match status" value="1"/>
</dbReference>
<dbReference type="NCBIfam" id="NF002834">
    <property type="entry name" value="PRK03011.1-5"/>
    <property type="match status" value="1"/>
</dbReference>
<dbReference type="PANTHER" id="PTHR21060">
    <property type="entry name" value="ACETATE KINASE"/>
    <property type="match status" value="1"/>
</dbReference>
<dbReference type="PANTHER" id="PTHR21060:SF20">
    <property type="entry name" value="BUTYRATE KINASE 1-RELATED"/>
    <property type="match status" value="1"/>
</dbReference>
<dbReference type="Pfam" id="PF00871">
    <property type="entry name" value="Acetate_kinase"/>
    <property type="match status" value="1"/>
</dbReference>
<dbReference type="PIRSF" id="PIRSF036458">
    <property type="entry name" value="Butyrate_kin"/>
    <property type="match status" value="1"/>
</dbReference>
<dbReference type="PRINTS" id="PR00471">
    <property type="entry name" value="ACETATEKNASE"/>
</dbReference>
<dbReference type="SUPFAM" id="SSF53067">
    <property type="entry name" value="Actin-like ATPase domain"/>
    <property type="match status" value="2"/>
</dbReference>
<dbReference type="PROSITE" id="PS01075">
    <property type="entry name" value="ACETATE_KINASE_1"/>
    <property type="match status" value="1"/>
</dbReference>
<dbReference type="PROSITE" id="PS01076">
    <property type="entry name" value="ACETATE_KINASE_2"/>
    <property type="match status" value="1"/>
</dbReference>
<keyword id="KW-0067">ATP-binding</keyword>
<keyword id="KW-0963">Cytoplasm</keyword>
<keyword id="KW-0418">Kinase</keyword>
<keyword id="KW-0547">Nucleotide-binding</keyword>
<keyword id="KW-1185">Reference proteome</keyword>
<keyword id="KW-0808">Transferase</keyword>
<name>BUK1_THEMA</name>
<evidence type="ECO:0000255" key="1">
    <source>
        <dbReference type="HAMAP-Rule" id="MF_00542"/>
    </source>
</evidence>
<proteinExistence type="inferred from homology"/>